<feature type="chain" id="PRO_0000284187" description="Endoribonuclease YbeY">
    <location>
        <begin position="1"/>
        <end position="154"/>
    </location>
</feature>
<feature type="binding site" evidence="1">
    <location>
        <position position="116"/>
    </location>
    <ligand>
        <name>Zn(2+)</name>
        <dbReference type="ChEBI" id="CHEBI:29105"/>
        <note>catalytic</note>
    </ligand>
</feature>
<feature type="binding site" evidence="1">
    <location>
        <position position="120"/>
    </location>
    <ligand>
        <name>Zn(2+)</name>
        <dbReference type="ChEBI" id="CHEBI:29105"/>
        <note>catalytic</note>
    </ligand>
</feature>
<feature type="binding site" evidence="1">
    <location>
        <position position="126"/>
    </location>
    <ligand>
        <name>Zn(2+)</name>
        <dbReference type="ChEBI" id="CHEBI:29105"/>
        <note>catalytic</note>
    </ligand>
</feature>
<sequence length="154" mass="17047">MTPDIDRQVALETATELLPTQADLEAWVGAVLARHPDTDRHELSVRFVTADESQALNRDYRGKDKPTNVLSFPFEAPPGLPLALLGDLAICHAVVVDEAAEQGKPLAHHYAHMVIHGTLHLLGYDHIDDREAEEMEALERELLAHFAIGDPYAE</sequence>
<gene>
    <name evidence="1" type="primary">ybeY</name>
    <name type="ordered locus">Csal_2336</name>
</gene>
<comment type="function">
    <text evidence="1">Single strand-specific metallo-endoribonuclease involved in late-stage 70S ribosome quality control and in maturation of the 3' terminus of the 16S rRNA.</text>
</comment>
<comment type="cofactor">
    <cofactor evidence="1">
        <name>Zn(2+)</name>
        <dbReference type="ChEBI" id="CHEBI:29105"/>
    </cofactor>
    <text evidence="1">Binds 1 zinc ion.</text>
</comment>
<comment type="subcellular location">
    <subcellularLocation>
        <location evidence="1">Cytoplasm</location>
    </subcellularLocation>
</comment>
<comment type="similarity">
    <text evidence="1">Belongs to the endoribonuclease YbeY family.</text>
</comment>
<name>YBEY_CHRSD</name>
<dbReference type="EC" id="3.1.-.-" evidence="1"/>
<dbReference type="EMBL" id="CP000285">
    <property type="protein sequence ID" value="ABE59686.1"/>
    <property type="molecule type" value="Genomic_DNA"/>
</dbReference>
<dbReference type="RefSeq" id="WP_011507632.1">
    <property type="nucleotide sequence ID" value="NC_007963.1"/>
</dbReference>
<dbReference type="SMR" id="Q1QV22"/>
<dbReference type="STRING" id="290398.Csal_2336"/>
<dbReference type="GeneID" id="95335047"/>
<dbReference type="KEGG" id="csa:Csal_2336"/>
<dbReference type="eggNOG" id="COG0319">
    <property type="taxonomic scope" value="Bacteria"/>
</dbReference>
<dbReference type="HOGENOM" id="CLU_106710_0_1_6"/>
<dbReference type="OrthoDB" id="9807740at2"/>
<dbReference type="Proteomes" id="UP000000239">
    <property type="component" value="Chromosome"/>
</dbReference>
<dbReference type="GO" id="GO:0005737">
    <property type="term" value="C:cytoplasm"/>
    <property type="evidence" value="ECO:0007669"/>
    <property type="project" value="UniProtKB-SubCell"/>
</dbReference>
<dbReference type="GO" id="GO:0004222">
    <property type="term" value="F:metalloendopeptidase activity"/>
    <property type="evidence" value="ECO:0007669"/>
    <property type="project" value="InterPro"/>
</dbReference>
<dbReference type="GO" id="GO:0004521">
    <property type="term" value="F:RNA endonuclease activity"/>
    <property type="evidence" value="ECO:0007669"/>
    <property type="project" value="UniProtKB-UniRule"/>
</dbReference>
<dbReference type="GO" id="GO:0008270">
    <property type="term" value="F:zinc ion binding"/>
    <property type="evidence" value="ECO:0007669"/>
    <property type="project" value="UniProtKB-UniRule"/>
</dbReference>
<dbReference type="GO" id="GO:0006364">
    <property type="term" value="P:rRNA processing"/>
    <property type="evidence" value="ECO:0007669"/>
    <property type="project" value="UniProtKB-UniRule"/>
</dbReference>
<dbReference type="Gene3D" id="3.40.390.30">
    <property type="entry name" value="Metalloproteases ('zincins'), catalytic domain"/>
    <property type="match status" value="1"/>
</dbReference>
<dbReference type="HAMAP" id="MF_00009">
    <property type="entry name" value="Endoribonucl_YbeY"/>
    <property type="match status" value="1"/>
</dbReference>
<dbReference type="InterPro" id="IPR023091">
    <property type="entry name" value="MetalPrtase_cat_dom_sf_prd"/>
</dbReference>
<dbReference type="InterPro" id="IPR002036">
    <property type="entry name" value="YbeY"/>
</dbReference>
<dbReference type="InterPro" id="IPR020549">
    <property type="entry name" value="YbeY_CS"/>
</dbReference>
<dbReference type="NCBIfam" id="TIGR00043">
    <property type="entry name" value="rRNA maturation RNase YbeY"/>
    <property type="match status" value="1"/>
</dbReference>
<dbReference type="PANTHER" id="PTHR46986">
    <property type="entry name" value="ENDORIBONUCLEASE YBEY, CHLOROPLASTIC"/>
    <property type="match status" value="1"/>
</dbReference>
<dbReference type="PANTHER" id="PTHR46986:SF1">
    <property type="entry name" value="ENDORIBONUCLEASE YBEY, CHLOROPLASTIC"/>
    <property type="match status" value="1"/>
</dbReference>
<dbReference type="Pfam" id="PF02130">
    <property type="entry name" value="YbeY"/>
    <property type="match status" value="1"/>
</dbReference>
<dbReference type="SUPFAM" id="SSF55486">
    <property type="entry name" value="Metalloproteases ('zincins'), catalytic domain"/>
    <property type="match status" value="1"/>
</dbReference>
<dbReference type="PROSITE" id="PS01306">
    <property type="entry name" value="UPF0054"/>
    <property type="match status" value="1"/>
</dbReference>
<accession>Q1QV22</accession>
<protein>
    <recommendedName>
        <fullName evidence="1">Endoribonuclease YbeY</fullName>
        <ecNumber evidence="1">3.1.-.-</ecNumber>
    </recommendedName>
</protein>
<organism>
    <name type="scientific">Chromohalobacter salexigens (strain ATCC BAA-138 / DSM 3043 / CIP 106854 / NCIMB 13768 / 1H11)</name>
    <dbReference type="NCBI Taxonomy" id="290398"/>
    <lineage>
        <taxon>Bacteria</taxon>
        <taxon>Pseudomonadati</taxon>
        <taxon>Pseudomonadota</taxon>
        <taxon>Gammaproteobacteria</taxon>
        <taxon>Oceanospirillales</taxon>
        <taxon>Halomonadaceae</taxon>
        <taxon>Chromohalobacter</taxon>
    </lineage>
</organism>
<evidence type="ECO:0000255" key="1">
    <source>
        <dbReference type="HAMAP-Rule" id="MF_00009"/>
    </source>
</evidence>
<reference key="1">
    <citation type="journal article" date="2011" name="Stand. Genomic Sci.">
        <title>Complete genome sequence of the halophilic and highly halotolerant Chromohalobacter salexigens type strain (1H11(T)).</title>
        <authorList>
            <person name="Copeland A."/>
            <person name="O'Connor K."/>
            <person name="Lucas S."/>
            <person name="Lapidus A."/>
            <person name="Berry K.W."/>
            <person name="Detter J.C."/>
            <person name="Del Rio T.G."/>
            <person name="Hammon N."/>
            <person name="Dalin E."/>
            <person name="Tice H."/>
            <person name="Pitluck S."/>
            <person name="Bruce D."/>
            <person name="Goodwin L."/>
            <person name="Han C."/>
            <person name="Tapia R."/>
            <person name="Saunders E."/>
            <person name="Schmutz J."/>
            <person name="Brettin T."/>
            <person name="Larimer F."/>
            <person name="Land M."/>
            <person name="Hauser L."/>
            <person name="Vargas C."/>
            <person name="Nieto J.J."/>
            <person name="Kyrpides N.C."/>
            <person name="Ivanova N."/>
            <person name="Goker M."/>
            <person name="Klenk H.P."/>
            <person name="Csonka L.N."/>
            <person name="Woyke T."/>
        </authorList>
    </citation>
    <scope>NUCLEOTIDE SEQUENCE [LARGE SCALE GENOMIC DNA]</scope>
    <source>
        <strain>ATCC BAA-138 / DSM 3043 / CIP 106854 / NCIMB 13768 / 1H11</strain>
    </source>
</reference>
<keyword id="KW-0963">Cytoplasm</keyword>
<keyword id="KW-0255">Endonuclease</keyword>
<keyword id="KW-0378">Hydrolase</keyword>
<keyword id="KW-0479">Metal-binding</keyword>
<keyword id="KW-0540">Nuclease</keyword>
<keyword id="KW-1185">Reference proteome</keyword>
<keyword id="KW-0690">Ribosome biogenesis</keyword>
<keyword id="KW-0698">rRNA processing</keyword>
<keyword id="KW-0862">Zinc</keyword>
<proteinExistence type="inferred from homology"/>